<evidence type="ECO:0000255" key="1">
    <source>
        <dbReference type="HAMAP-Rule" id="MF_00819"/>
    </source>
</evidence>
<evidence type="ECO:0000305" key="2"/>
<organism>
    <name type="scientific">Bacillus anthracis</name>
    <dbReference type="NCBI Taxonomy" id="1392"/>
    <lineage>
        <taxon>Bacteria</taxon>
        <taxon>Bacillati</taxon>
        <taxon>Bacillota</taxon>
        <taxon>Bacilli</taxon>
        <taxon>Bacillales</taxon>
        <taxon>Bacillaceae</taxon>
        <taxon>Bacillus</taxon>
        <taxon>Bacillus cereus group</taxon>
    </lineage>
</organism>
<dbReference type="EMBL" id="AE016879">
    <property type="protein sequence ID" value="AAP24102.1"/>
    <property type="molecule type" value="Genomic_DNA"/>
</dbReference>
<dbReference type="EMBL" id="AE017334">
    <property type="protein sequence ID" value="AAT29125.2"/>
    <property type="molecule type" value="Genomic_DNA"/>
</dbReference>
<dbReference type="EMBL" id="AE017225">
    <property type="protein sequence ID" value="AAT52385.1"/>
    <property type="status" value="ALT_INIT"/>
    <property type="molecule type" value="Genomic_DNA"/>
</dbReference>
<dbReference type="RefSeq" id="NP_842616.1">
    <property type="nucleotide sequence ID" value="NC_003997.3"/>
</dbReference>
<dbReference type="RefSeq" id="WP_000454041.1">
    <property type="nucleotide sequence ID" value="NZ_WXXJ01000001.1"/>
</dbReference>
<dbReference type="SMR" id="Q81VZ2"/>
<dbReference type="STRING" id="261594.GBAA_0047"/>
<dbReference type="DNASU" id="1087291"/>
<dbReference type="GeneID" id="93011022"/>
<dbReference type="KEGG" id="ban:BA_0047"/>
<dbReference type="KEGG" id="bar:GBAA_0047"/>
<dbReference type="KEGG" id="bat:BAS0047"/>
<dbReference type="PATRIC" id="fig|198094.11.peg.44"/>
<dbReference type="eggNOG" id="COG2088">
    <property type="taxonomic scope" value="Bacteria"/>
</dbReference>
<dbReference type="HOGENOM" id="CLU_103669_2_1_9"/>
<dbReference type="OMA" id="EYRDIAH"/>
<dbReference type="OrthoDB" id="9796286at2"/>
<dbReference type="Proteomes" id="UP000000427">
    <property type="component" value="Chromosome"/>
</dbReference>
<dbReference type="Proteomes" id="UP000000594">
    <property type="component" value="Chromosome"/>
</dbReference>
<dbReference type="GO" id="GO:0030436">
    <property type="term" value="P:asexual sporulation"/>
    <property type="evidence" value="ECO:0007669"/>
    <property type="project" value="UniProtKB-UniRule"/>
</dbReference>
<dbReference type="GO" id="GO:0000917">
    <property type="term" value="P:division septum assembly"/>
    <property type="evidence" value="ECO:0007669"/>
    <property type="project" value="UniProtKB-KW"/>
</dbReference>
<dbReference type="GO" id="GO:0030435">
    <property type="term" value="P:sporulation resulting in formation of a cellular spore"/>
    <property type="evidence" value="ECO:0007669"/>
    <property type="project" value="UniProtKB-KW"/>
</dbReference>
<dbReference type="FunFam" id="3.30.1120.40:FF:000001">
    <property type="entry name" value="Putative septation protein SpoVG"/>
    <property type="match status" value="1"/>
</dbReference>
<dbReference type="Gene3D" id="3.30.1120.40">
    <property type="entry name" value="Stage V sporulation protein G"/>
    <property type="match status" value="1"/>
</dbReference>
<dbReference type="HAMAP" id="MF_00819">
    <property type="entry name" value="SpoVG"/>
    <property type="match status" value="1"/>
</dbReference>
<dbReference type="InterPro" id="IPR007170">
    <property type="entry name" value="SpoVG"/>
</dbReference>
<dbReference type="InterPro" id="IPR036751">
    <property type="entry name" value="SpoVG_sf"/>
</dbReference>
<dbReference type="NCBIfam" id="NF009749">
    <property type="entry name" value="PRK13259.1"/>
    <property type="match status" value="1"/>
</dbReference>
<dbReference type="PANTHER" id="PTHR38429">
    <property type="entry name" value="SEPTATION PROTEIN SPOVG-RELATED"/>
    <property type="match status" value="1"/>
</dbReference>
<dbReference type="PANTHER" id="PTHR38429:SF1">
    <property type="entry name" value="SEPTATION PROTEIN SPOVG-RELATED"/>
    <property type="match status" value="1"/>
</dbReference>
<dbReference type="Pfam" id="PF04026">
    <property type="entry name" value="SpoVG"/>
    <property type="match status" value="1"/>
</dbReference>
<dbReference type="SUPFAM" id="SSF160537">
    <property type="entry name" value="SpoVG-like"/>
    <property type="match status" value="1"/>
</dbReference>
<protein>
    <recommendedName>
        <fullName evidence="1">Putative septation protein SpoVG</fullName>
    </recommendedName>
    <alternativeName>
        <fullName evidence="1">Stage V sporulation protein G</fullName>
    </alternativeName>
</protein>
<feature type="chain" id="PRO_0000157180" description="Putative septation protein SpoVG">
    <location>
        <begin position="1"/>
        <end position="97"/>
    </location>
</feature>
<reference key="1">
    <citation type="journal article" date="2003" name="Nature">
        <title>The genome sequence of Bacillus anthracis Ames and comparison to closely related bacteria.</title>
        <authorList>
            <person name="Read T.D."/>
            <person name="Peterson S.N."/>
            <person name="Tourasse N.J."/>
            <person name="Baillie L.W."/>
            <person name="Paulsen I.T."/>
            <person name="Nelson K.E."/>
            <person name="Tettelin H."/>
            <person name="Fouts D.E."/>
            <person name="Eisen J.A."/>
            <person name="Gill S.R."/>
            <person name="Holtzapple E.K."/>
            <person name="Okstad O.A."/>
            <person name="Helgason E."/>
            <person name="Rilstone J."/>
            <person name="Wu M."/>
            <person name="Kolonay J.F."/>
            <person name="Beanan M.J."/>
            <person name="Dodson R.J."/>
            <person name="Brinkac L.M."/>
            <person name="Gwinn M.L."/>
            <person name="DeBoy R.T."/>
            <person name="Madpu R."/>
            <person name="Daugherty S.C."/>
            <person name="Durkin A.S."/>
            <person name="Haft D.H."/>
            <person name="Nelson W.C."/>
            <person name="Peterson J.D."/>
            <person name="Pop M."/>
            <person name="Khouri H.M."/>
            <person name="Radune D."/>
            <person name="Benton J.L."/>
            <person name="Mahamoud Y."/>
            <person name="Jiang L."/>
            <person name="Hance I.R."/>
            <person name="Weidman J.F."/>
            <person name="Berry K.J."/>
            <person name="Plaut R.D."/>
            <person name="Wolf A.M."/>
            <person name="Watkins K.L."/>
            <person name="Nierman W.C."/>
            <person name="Hazen A."/>
            <person name="Cline R.T."/>
            <person name="Redmond C."/>
            <person name="Thwaite J.E."/>
            <person name="White O."/>
            <person name="Salzberg S.L."/>
            <person name="Thomason B."/>
            <person name="Friedlander A.M."/>
            <person name="Koehler T.M."/>
            <person name="Hanna P.C."/>
            <person name="Kolstoe A.-B."/>
            <person name="Fraser C.M."/>
        </authorList>
    </citation>
    <scope>NUCLEOTIDE SEQUENCE [LARGE SCALE GENOMIC DNA]</scope>
    <source>
        <strain>Ames / isolate Porton</strain>
    </source>
</reference>
<reference key="2">
    <citation type="journal article" date="2009" name="J. Bacteriol.">
        <title>The complete genome sequence of Bacillus anthracis Ames 'Ancestor'.</title>
        <authorList>
            <person name="Ravel J."/>
            <person name="Jiang L."/>
            <person name="Stanley S.T."/>
            <person name="Wilson M.R."/>
            <person name="Decker R.S."/>
            <person name="Read T.D."/>
            <person name="Worsham P."/>
            <person name="Keim P.S."/>
            <person name="Salzberg S.L."/>
            <person name="Fraser-Liggett C.M."/>
            <person name="Rasko D.A."/>
        </authorList>
    </citation>
    <scope>NUCLEOTIDE SEQUENCE [LARGE SCALE GENOMIC DNA]</scope>
    <source>
        <strain>Ames ancestor</strain>
    </source>
</reference>
<reference key="3">
    <citation type="submission" date="2004-01" db="EMBL/GenBank/DDBJ databases">
        <title>Complete genome sequence of Bacillus anthracis Sterne.</title>
        <authorList>
            <person name="Brettin T.S."/>
            <person name="Bruce D."/>
            <person name="Challacombe J.F."/>
            <person name="Gilna P."/>
            <person name="Han C."/>
            <person name="Hill K."/>
            <person name="Hitchcock P."/>
            <person name="Jackson P."/>
            <person name="Keim P."/>
            <person name="Longmire J."/>
            <person name="Lucas S."/>
            <person name="Okinaka R."/>
            <person name="Richardson P."/>
            <person name="Rubin E."/>
            <person name="Tice H."/>
        </authorList>
    </citation>
    <scope>NUCLEOTIDE SEQUENCE [LARGE SCALE GENOMIC DNA]</scope>
    <source>
        <strain>Sterne</strain>
    </source>
</reference>
<keyword id="KW-0131">Cell cycle</keyword>
<keyword id="KW-0132">Cell division</keyword>
<keyword id="KW-1185">Reference proteome</keyword>
<keyword id="KW-0717">Septation</keyword>
<keyword id="KW-0749">Sporulation</keyword>
<proteinExistence type="inferred from homology"/>
<gene>
    <name evidence="1" type="primary">spoVG</name>
    <name type="ordered locus">BA_0047</name>
    <name type="ordered locus">GBAA_0047</name>
    <name type="ordered locus">BAS0047</name>
</gene>
<name>SP5G_BACAN</name>
<sequence length="97" mass="10934">MEVTDVRLRRVNTEGRMRAIASITLDHEFVVHDIRVIDGNNGLFVAMPSKRTPDGEFRDIAHPINSGTRSKIQDAVLTEYHRLGELEEVEFEEAGAS</sequence>
<accession>Q81VZ2</accession>
<accession>Q6I4Z6</accession>
<accession>Q6KYP0</accession>
<comment type="function">
    <text evidence="1">Essential for sporulation. Interferes with or is a negative regulator of the pathway leading to asymmetric septation.</text>
</comment>
<comment type="similarity">
    <text evidence="1">Belongs to the SpoVG family.</text>
</comment>
<comment type="sequence caution" evidence="2">
    <conflict type="erroneous initiation">
        <sequence resource="EMBL-CDS" id="AAT52385"/>
    </conflict>
</comment>